<dbReference type="EC" id="6.3.1.5" evidence="1"/>
<dbReference type="EMBL" id="CP000525">
    <property type="protein sequence ID" value="ABM49366.1"/>
    <property type="molecule type" value="Genomic_DNA"/>
</dbReference>
<dbReference type="RefSeq" id="WP_004201926.1">
    <property type="nucleotide sequence ID" value="NC_008784.1"/>
</dbReference>
<dbReference type="SMR" id="A1UW43"/>
<dbReference type="GeneID" id="92976563"/>
<dbReference type="KEGG" id="bmv:BMASAVP1_0588"/>
<dbReference type="HOGENOM" id="CLU_059327_3_0_4"/>
<dbReference type="UniPathway" id="UPA00253">
    <property type="reaction ID" value="UER00333"/>
</dbReference>
<dbReference type="GO" id="GO:0005737">
    <property type="term" value="C:cytoplasm"/>
    <property type="evidence" value="ECO:0007669"/>
    <property type="project" value="InterPro"/>
</dbReference>
<dbReference type="GO" id="GO:0005524">
    <property type="term" value="F:ATP binding"/>
    <property type="evidence" value="ECO:0007669"/>
    <property type="project" value="UniProtKB-UniRule"/>
</dbReference>
<dbReference type="GO" id="GO:0004359">
    <property type="term" value="F:glutaminase activity"/>
    <property type="evidence" value="ECO:0007669"/>
    <property type="project" value="InterPro"/>
</dbReference>
<dbReference type="GO" id="GO:0046872">
    <property type="term" value="F:metal ion binding"/>
    <property type="evidence" value="ECO:0007669"/>
    <property type="project" value="UniProtKB-KW"/>
</dbReference>
<dbReference type="GO" id="GO:0003952">
    <property type="term" value="F:NAD+ synthase (glutamine-hydrolyzing) activity"/>
    <property type="evidence" value="ECO:0007669"/>
    <property type="project" value="InterPro"/>
</dbReference>
<dbReference type="GO" id="GO:0008795">
    <property type="term" value="F:NAD+ synthase activity"/>
    <property type="evidence" value="ECO:0007669"/>
    <property type="project" value="UniProtKB-UniRule"/>
</dbReference>
<dbReference type="GO" id="GO:0009435">
    <property type="term" value="P:NAD biosynthetic process"/>
    <property type="evidence" value="ECO:0007669"/>
    <property type="project" value="UniProtKB-UniRule"/>
</dbReference>
<dbReference type="CDD" id="cd00553">
    <property type="entry name" value="NAD_synthase"/>
    <property type="match status" value="1"/>
</dbReference>
<dbReference type="Gene3D" id="3.40.50.620">
    <property type="entry name" value="HUPs"/>
    <property type="match status" value="1"/>
</dbReference>
<dbReference type="HAMAP" id="MF_00193">
    <property type="entry name" value="NadE_ammonia_dep"/>
    <property type="match status" value="1"/>
</dbReference>
<dbReference type="InterPro" id="IPR022310">
    <property type="entry name" value="NAD/GMP_synthase"/>
</dbReference>
<dbReference type="InterPro" id="IPR003694">
    <property type="entry name" value="NAD_synthase"/>
</dbReference>
<dbReference type="InterPro" id="IPR022926">
    <property type="entry name" value="NH(3)-dep_NAD(+)_synth"/>
</dbReference>
<dbReference type="InterPro" id="IPR014729">
    <property type="entry name" value="Rossmann-like_a/b/a_fold"/>
</dbReference>
<dbReference type="NCBIfam" id="TIGR00552">
    <property type="entry name" value="nadE"/>
    <property type="match status" value="1"/>
</dbReference>
<dbReference type="NCBIfam" id="NF001979">
    <property type="entry name" value="PRK00768.1"/>
    <property type="match status" value="1"/>
</dbReference>
<dbReference type="PANTHER" id="PTHR23090">
    <property type="entry name" value="NH 3 /GLUTAMINE-DEPENDENT NAD + SYNTHETASE"/>
    <property type="match status" value="1"/>
</dbReference>
<dbReference type="PANTHER" id="PTHR23090:SF7">
    <property type="entry name" value="NH(3)-DEPENDENT NAD(+) SYNTHETASE"/>
    <property type="match status" value="1"/>
</dbReference>
<dbReference type="Pfam" id="PF02540">
    <property type="entry name" value="NAD_synthase"/>
    <property type="match status" value="1"/>
</dbReference>
<dbReference type="SUPFAM" id="SSF52402">
    <property type="entry name" value="Adenine nucleotide alpha hydrolases-like"/>
    <property type="match status" value="1"/>
</dbReference>
<sequence>MSRPDQAARRRAIAAELHVSPTFDARDEAERRIGFVADYLRTAGLRACVLGISGGIDSSTAGRLAQLAVERLRASGYDARFVAMRLPYGAQHDEADARRALAFVRADETLTVDVKPAADAMLAALAAGGLAYLDHAQQDFVLGNIKARERMIAQYAVAGARNGVVIGTDHAAESVMGFFTKFGDGGADVLPLAGLTKRRVRALARMLGADEPLVLKTPTADLETLRPQRPDEHAYGITYEQIDDFLEGKPMDDAVAETVLRFYDATHHKRALPYTMFDWPGHPA</sequence>
<keyword id="KW-0067">ATP-binding</keyword>
<keyword id="KW-0436">Ligase</keyword>
<keyword id="KW-0460">Magnesium</keyword>
<keyword id="KW-0479">Metal-binding</keyword>
<keyword id="KW-0520">NAD</keyword>
<keyword id="KW-0547">Nucleotide-binding</keyword>
<feature type="chain" id="PRO_1000099009" description="NH(3)-dependent NAD(+) synthetase">
    <location>
        <begin position="1"/>
        <end position="284"/>
    </location>
</feature>
<feature type="binding site" evidence="1">
    <location>
        <begin position="51"/>
        <end position="58"/>
    </location>
    <ligand>
        <name>ATP</name>
        <dbReference type="ChEBI" id="CHEBI:30616"/>
    </ligand>
</feature>
<feature type="binding site" evidence="1">
    <location>
        <position position="57"/>
    </location>
    <ligand>
        <name>Mg(2+)</name>
        <dbReference type="ChEBI" id="CHEBI:18420"/>
    </ligand>
</feature>
<feature type="binding site" evidence="1">
    <location>
        <position position="148"/>
    </location>
    <ligand>
        <name>deamido-NAD(+)</name>
        <dbReference type="ChEBI" id="CHEBI:58437"/>
    </ligand>
</feature>
<feature type="binding site" evidence="1">
    <location>
        <position position="168"/>
    </location>
    <ligand>
        <name>ATP</name>
        <dbReference type="ChEBI" id="CHEBI:30616"/>
    </ligand>
</feature>
<feature type="binding site" evidence="1">
    <location>
        <position position="173"/>
    </location>
    <ligand>
        <name>Mg(2+)</name>
        <dbReference type="ChEBI" id="CHEBI:18420"/>
    </ligand>
</feature>
<feature type="binding site" evidence="1">
    <location>
        <position position="181"/>
    </location>
    <ligand>
        <name>deamido-NAD(+)</name>
        <dbReference type="ChEBI" id="CHEBI:58437"/>
    </ligand>
</feature>
<feature type="binding site" evidence="1">
    <location>
        <position position="188"/>
    </location>
    <ligand>
        <name>deamido-NAD(+)</name>
        <dbReference type="ChEBI" id="CHEBI:58437"/>
    </ligand>
</feature>
<feature type="binding site" evidence="1">
    <location>
        <position position="197"/>
    </location>
    <ligand>
        <name>ATP</name>
        <dbReference type="ChEBI" id="CHEBI:30616"/>
    </ligand>
</feature>
<feature type="binding site" evidence="1">
    <location>
        <position position="219"/>
    </location>
    <ligand>
        <name>ATP</name>
        <dbReference type="ChEBI" id="CHEBI:30616"/>
    </ligand>
</feature>
<feature type="binding site" evidence="1">
    <location>
        <begin position="268"/>
        <end position="269"/>
    </location>
    <ligand>
        <name>deamido-NAD(+)</name>
        <dbReference type="ChEBI" id="CHEBI:58437"/>
    </ligand>
</feature>
<comment type="function">
    <text evidence="1">Catalyzes the ATP-dependent amidation of deamido-NAD to form NAD. Uses ammonia as a nitrogen source.</text>
</comment>
<comment type="catalytic activity">
    <reaction evidence="1">
        <text>deamido-NAD(+) + NH4(+) + ATP = AMP + diphosphate + NAD(+) + H(+)</text>
        <dbReference type="Rhea" id="RHEA:21188"/>
        <dbReference type="ChEBI" id="CHEBI:15378"/>
        <dbReference type="ChEBI" id="CHEBI:28938"/>
        <dbReference type="ChEBI" id="CHEBI:30616"/>
        <dbReference type="ChEBI" id="CHEBI:33019"/>
        <dbReference type="ChEBI" id="CHEBI:57540"/>
        <dbReference type="ChEBI" id="CHEBI:58437"/>
        <dbReference type="ChEBI" id="CHEBI:456215"/>
        <dbReference type="EC" id="6.3.1.5"/>
    </reaction>
</comment>
<comment type="pathway">
    <text evidence="1">Cofactor biosynthesis; NAD(+) biosynthesis; NAD(+) from deamido-NAD(+) (ammonia route): step 1/1.</text>
</comment>
<comment type="subunit">
    <text evidence="1">Homodimer.</text>
</comment>
<comment type="similarity">
    <text evidence="1">Belongs to the NAD synthetase family.</text>
</comment>
<accession>A1UW43</accession>
<gene>
    <name evidence="1" type="primary">nadE</name>
    <name type="ordered locus">BMASAVP1_0588</name>
</gene>
<evidence type="ECO:0000255" key="1">
    <source>
        <dbReference type="HAMAP-Rule" id="MF_00193"/>
    </source>
</evidence>
<proteinExistence type="inferred from homology"/>
<name>NADE_BURMS</name>
<reference key="1">
    <citation type="journal article" date="2010" name="Genome Biol. Evol.">
        <title>Continuing evolution of Burkholderia mallei through genome reduction and large-scale rearrangements.</title>
        <authorList>
            <person name="Losada L."/>
            <person name="Ronning C.M."/>
            <person name="DeShazer D."/>
            <person name="Woods D."/>
            <person name="Fedorova N."/>
            <person name="Kim H.S."/>
            <person name="Shabalina S.A."/>
            <person name="Pearson T.R."/>
            <person name="Brinkac L."/>
            <person name="Tan P."/>
            <person name="Nandi T."/>
            <person name="Crabtree J."/>
            <person name="Badger J."/>
            <person name="Beckstrom-Sternberg S."/>
            <person name="Saqib M."/>
            <person name="Schutzer S.E."/>
            <person name="Keim P."/>
            <person name="Nierman W.C."/>
        </authorList>
    </citation>
    <scope>NUCLEOTIDE SEQUENCE [LARGE SCALE GENOMIC DNA]</scope>
    <source>
        <strain>SAVP1</strain>
    </source>
</reference>
<protein>
    <recommendedName>
        <fullName evidence="1">NH(3)-dependent NAD(+) synthetase</fullName>
        <ecNumber evidence="1">6.3.1.5</ecNumber>
    </recommendedName>
</protein>
<organism>
    <name type="scientific">Burkholderia mallei (strain SAVP1)</name>
    <dbReference type="NCBI Taxonomy" id="320388"/>
    <lineage>
        <taxon>Bacteria</taxon>
        <taxon>Pseudomonadati</taxon>
        <taxon>Pseudomonadota</taxon>
        <taxon>Betaproteobacteria</taxon>
        <taxon>Burkholderiales</taxon>
        <taxon>Burkholderiaceae</taxon>
        <taxon>Burkholderia</taxon>
        <taxon>pseudomallei group</taxon>
    </lineage>
</organism>